<keyword id="KW-0687">Ribonucleoprotein</keyword>
<keyword id="KW-0689">Ribosomal protein</keyword>
<name>RL14E_SACI1</name>
<proteinExistence type="inferred from homology"/>
<reference key="1">
    <citation type="journal article" date="2009" name="Proc. Natl. Acad. Sci. U.S.A.">
        <title>Biogeography of the Sulfolobus islandicus pan-genome.</title>
        <authorList>
            <person name="Reno M.L."/>
            <person name="Held N.L."/>
            <person name="Fields C.J."/>
            <person name="Burke P.V."/>
            <person name="Whitaker R.J."/>
        </authorList>
    </citation>
    <scope>NUCLEOTIDE SEQUENCE [LARGE SCALE GENOMIC DNA]</scope>
    <source>
        <strain>Y.N.15.51 / Yellowstone #2</strain>
    </source>
</reference>
<sequence>MPAIEVGRICVKVKGREAGSKCVIVDIIDDNFVLVTGPKDISGVKRRRVNILHLEPTDKKIDIQKGASDEEVRKKIEEAGLTEYMKERIKIKIPTL</sequence>
<evidence type="ECO:0000255" key="1">
    <source>
        <dbReference type="HAMAP-Rule" id="MF_00721"/>
    </source>
</evidence>
<evidence type="ECO:0000305" key="2"/>
<gene>
    <name evidence="1" type="primary">rpl14e</name>
    <name type="ordered locus">YN1551_1100</name>
</gene>
<accession>C3NGE6</accession>
<feature type="chain" id="PRO_1000212709" description="Large ribosomal subunit protein eL14">
    <location>
        <begin position="1"/>
        <end position="96"/>
    </location>
</feature>
<organism>
    <name type="scientific">Saccharolobus islandicus (strain Y.N.15.51 / Yellowstone #2)</name>
    <name type="common">Sulfolobus islandicus</name>
    <dbReference type="NCBI Taxonomy" id="419942"/>
    <lineage>
        <taxon>Archaea</taxon>
        <taxon>Thermoproteota</taxon>
        <taxon>Thermoprotei</taxon>
        <taxon>Sulfolobales</taxon>
        <taxon>Sulfolobaceae</taxon>
        <taxon>Saccharolobus</taxon>
    </lineage>
</organism>
<dbReference type="EMBL" id="CP001404">
    <property type="protein sequence ID" value="ACP48206.1"/>
    <property type="molecule type" value="Genomic_DNA"/>
</dbReference>
<dbReference type="RefSeq" id="WP_012713922.1">
    <property type="nucleotide sequence ID" value="NC_012623.1"/>
</dbReference>
<dbReference type="SMR" id="C3NGE6"/>
<dbReference type="KEGG" id="sin:YN1551_1100"/>
<dbReference type="HOGENOM" id="CLU_183474_0_0_2"/>
<dbReference type="Proteomes" id="UP000006818">
    <property type="component" value="Chromosome"/>
</dbReference>
<dbReference type="GO" id="GO:0022625">
    <property type="term" value="C:cytosolic large ribosomal subunit"/>
    <property type="evidence" value="ECO:0007669"/>
    <property type="project" value="TreeGrafter"/>
</dbReference>
<dbReference type="GO" id="GO:0003723">
    <property type="term" value="F:RNA binding"/>
    <property type="evidence" value="ECO:0007669"/>
    <property type="project" value="InterPro"/>
</dbReference>
<dbReference type="GO" id="GO:0003735">
    <property type="term" value="F:structural constituent of ribosome"/>
    <property type="evidence" value="ECO:0007669"/>
    <property type="project" value="InterPro"/>
</dbReference>
<dbReference type="GO" id="GO:0042273">
    <property type="term" value="P:ribosomal large subunit biogenesis"/>
    <property type="evidence" value="ECO:0007669"/>
    <property type="project" value="TreeGrafter"/>
</dbReference>
<dbReference type="GO" id="GO:0006412">
    <property type="term" value="P:translation"/>
    <property type="evidence" value="ECO:0007669"/>
    <property type="project" value="UniProtKB-UniRule"/>
</dbReference>
<dbReference type="CDD" id="cd23702">
    <property type="entry name" value="eL14"/>
    <property type="match status" value="1"/>
</dbReference>
<dbReference type="FunFam" id="2.30.30.30:FF:000045">
    <property type="entry name" value="50S ribosomal protein L14e"/>
    <property type="match status" value="1"/>
</dbReference>
<dbReference type="Gene3D" id="2.30.30.30">
    <property type="match status" value="1"/>
</dbReference>
<dbReference type="HAMAP" id="MF_00721">
    <property type="entry name" value="Ribosomal_eL14"/>
    <property type="match status" value="1"/>
</dbReference>
<dbReference type="InterPro" id="IPR014722">
    <property type="entry name" value="Rib_uL2_dom2"/>
</dbReference>
<dbReference type="InterPro" id="IPR039660">
    <property type="entry name" value="Ribosomal_eL14"/>
</dbReference>
<dbReference type="InterPro" id="IPR023651">
    <property type="entry name" value="Ribosomal_eL14_arc"/>
</dbReference>
<dbReference type="InterPro" id="IPR008991">
    <property type="entry name" value="Translation_prot_SH3-like_sf"/>
</dbReference>
<dbReference type="NCBIfam" id="NF003320">
    <property type="entry name" value="PRK04333.1"/>
    <property type="match status" value="1"/>
</dbReference>
<dbReference type="PANTHER" id="PTHR11127">
    <property type="entry name" value="60S RIBOSOMAL PROTEIN L14"/>
    <property type="match status" value="1"/>
</dbReference>
<dbReference type="PANTHER" id="PTHR11127:SF2">
    <property type="entry name" value="LARGE RIBOSOMAL SUBUNIT PROTEIN EL14"/>
    <property type="match status" value="1"/>
</dbReference>
<dbReference type="SUPFAM" id="SSF50104">
    <property type="entry name" value="Translation proteins SH3-like domain"/>
    <property type="match status" value="1"/>
</dbReference>
<comment type="similarity">
    <text evidence="1">Belongs to the eukaryotic ribosomal protein eL14 family.</text>
</comment>
<protein>
    <recommendedName>
        <fullName evidence="1">Large ribosomal subunit protein eL14</fullName>
    </recommendedName>
    <alternativeName>
        <fullName evidence="2">50S ribosomal protein L14e</fullName>
    </alternativeName>
</protein>